<comment type="function">
    <text evidence="1">Required for ribosome biogenesis. Part of a complex which catalyzes pseudouridylation of rRNA. This involves the isomerization of uridine such that the ribose is subsequently attached to C5, instead of the normal N1. Pseudouridine ('psi') residues may serve to stabilize the conformation of rRNAs (By similarity).</text>
</comment>
<comment type="subunit">
    <text evidence="2">Component of the small nucleolar ribonucleoprotein particle containing H/ACA-type snoRNAs (H/ACA snoRNPs). Component of the telomerase holoenzyme complex.</text>
</comment>
<comment type="subcellular location">
    <subcellularLocation>
        <location evidence="1">Nucleus</location>
        <location evidence="1">Nucleolus</location>
    </subcellularLocation>
</comment>
<comment type="similarity">
    <text evidence="4">Belongs to the eukaryotic ribosomal protein eL8 family.</text>
</comment>
<reference key="1">
    <citation type="submission" date="2002-10" db="EMBL/GenBank/DDBJ databases">
        <title>Identification of the nucleolar protein family A member 2 from amphioxus.</title>
        <authorList>
            <person name="Zhang S."/>
            <person name="Liu Z."/>
            <person name="Liu M."/>
            <person name="Xu A."/>
        </authorList>
    </citation>
    <scope>NUCLEOTIDE SEQUENCE [MRNA]</scope>
    <source>
        <strain>Subsp. tsingtauense</strain>
    </source>
</reference>
<reference key="2">
    <citation type="submission" date="2001-07" db="EMBL/GenBank/DDBJ databases">
        <title>Nucleolar protein family A, member 2 (H/ACA small nucleolar RNPs) in amphioxus.</title>
        <authorList>
            <person name="Zhang H."/>
            <person name="Yang H."/>
        </authorList>
    </citation>
    <scope>NUCLEOTIDE SEQUENCE [MRNA] OF 34-159</scope>
    <source>
        <strain>Subsp. tsingtauense</strain>
    </source>
</reference>
<sequence>MAKTPKKDKTEEKEEHEESGGNKEDRERAYEVLATRVNPIASPLAARKLTKRLYKTVKKASKEKNIRKGIRDVQKFIKKGERGIVLIAGDTTPIEVYCHLPVVCEDAKIPYCYVPAKQDLGEAAGSKRPTCCVLLKPNESYQSSYDECLTDVTTLPRPI</sequence>
<evidence type="ECO:0000250" key="1"/>
<evidence type="ECO:0000250" key="2">
    <source>
        <dbReference type="UniProtKB" id="Q9NX24"/>
    </source>
</evidence>
<evidence type="ECO:0000256" key="3">
    <source>
        <dbReference type="SAM" id="MobiDB-lite"/>
    </source>
</evidence>
<evidence type="ECO:0000305" key="4"/>
<feature type="chain" id="PRO_0000136769" description="H/ACA ribonucleoprotein complex subunit 2-like protein">
    <location>
        <begin position="1"/>
        <end position="159"/>
    </location>
</feature>
<feature type="region of interest" description="Disordered" evidence="3">
    <location>
        <begin position="1"/>
        <end position="28"/>
    </location>
</feature>
<organism>
    <name type="scientific">Branchiostoma belcheri</name>
    <name type="common">Amphioxus</name>
    <dbReference type="NCBI Taxonomy" id="7741"/>
    <lineage>
        <taxon>Eukaryota</taxon>
        <taxon>Metazoa</taxon>
        <taxon>Chordata</taxon>
        <taxon>Cephalochordata</taxon>
        <taxon>Leptocardii</taxon>
        <taxon>Amphioxiformes</taxon>
        <taxon>Branchiostomatidae</taxon>
        <taxon>Branchiostoma</taxon>
    </lineage>
</organism>
<accession>Q8I7X7</accession>
<accession>Q95UQ5</accession>
<protein>
    <recommendedName>
        <fullName>H/ACA ribonucleoprotein complex subunit 2-like protein</fullName>
    </recommendedName>
</protein>
<keyword id="KW-0539">Nucleus</keyword>
<keyword id="KW-1185">Reference proteome</keyword>
<keyword id="KW-0687">Ribonucleoprotein</keyword>
<keyword id="KW-0690">Ribosome biogenesis</keyword>
<keyword id="KW-0694">RNA-binding</keyword>
<keyword id="KW-0698">rRNA processing</keyword>
<name>NHP2_BRABE</name>
<proteinExistence type="evidence at transcript level"/>
<dbReference type="EMBL" id="AY168452">
    <property type="protein sequence ID" value="AAN86977.1"/>
    <property type="molecule type" value="mRNA"/>
</dbReference>
<dbReference type="EMBL" id="AY043319">
    <property type="protein sequence ID" value="AAL02139.1"/>
    <property type="molecule type" value="mRNA"/>
</dbReference>
<dbReference type="SMR" id="Q8I7X7"/>
<dbReference type="OrthoDB" id="5364946at2759"/>
<dbReference type="Proteomes" id="UP000515135">
    <property type="component" value="Unplaced"/>
</dbReference>
<dbReference type="GO" id="GO:0005730">
    <property type="term" value="C:nucleolus"/>
    <property type="evidence" value="ECO:0007669"/>
    <property type="project" value="UniProtKB-SubCell"/>
</dbReference>
<dbReference type="GO" id="GO:0005732">
    <property type="term" value="C:sno(s)RNA-containing ribonucleoprotein complex"/>
    <property type="evidence" value="ECO:0000250"/>
    <property type="project" value="UniProtKB"/>
</dbReference>
<dbReference type="GO" id="GO:0005697">
    <property type="term" value="C:telomerase holoenzyme complex"/>
    <property type="evidence" value="ECO:0000250"/>
    <property type="project" value="UniProtKB"/>
</dbReference>
<dbReference type="GO" id="GO:0003723">
    <property type="term" value="F:RNA binding"/>
    <property type="evidence" value="ECO:0007669"/>
    <property type="project" value="UniProtKB-KW"/>
</dbReference>
<dbReference type="GO" id="GO:0031118">
    <property type="term" value="P:rRNA pseudouridine synthesis"/>
    <property type="evidence" value="ECO:0000250"/>
    <property type="project" value="UniProtKB"/>
</dbReference>
<dbReference type="GO" id="GO:0007004">
    <property type="term" value="P:telomere maintenance via telomerase"/>
    <property type="evidence" value="ECO:0000250"/>
    <property type="project" value="UniProtKB"/>
</dbReference>
<dbReference type="FunFam" id="3.30.1330.30:FF:000016">
    <property type="entry name" value="H/ACA ribonucleoprotein complex subunit 2"/>
    <property type="match status" value="1"/>
</dbReference>
<dbReference type="Gene3D" id="3.30.1330.30">
    <property type="match status" value="1"/>
</dbReference>
<dbReference type="InterPro" id="IPR050257">
    <property type="entry name" value="eL8/uL1-like"/>
</dbReference>
<dbReference type="InterPro" id="IPR002415">
    <property type="entry name" value="H/ACA_rnp_Nhp2-like"/>
</dbReference>
<dbReference type="InterPro" id="IPR029064">
    <property type="entry name" value="Ribosomal_eL30-like_sf"/>
</dbReference>
<dbReference type="InterPro" id="IPR004038">
    <property type="entry name" value="Ribosomal_eL8/eL30/eS12/Gad45"/>
</dbReference>
<dbReference type="InterPro" id="IPR018492">
    <property type="entry name" value="Ribosomal_eL8/Nhp2"/>
</dbReference>
<dbReference type="PANTHER" id="PTHR23105">
    <property type="entry name" value="RIBOSOMAL PROTEIN L7AE FAMILY MEMBER"/>
    <property type="match status" value="1"/>
</dbReference>
<dbReference type="Pfam" id="PF01248">
    <property type="entry name" value="Ribosomal_L7Ae"/>
    <property type="match status" value="1"/>
</dbReference>
<dbReference type="PRINTS" id="PR00881">
    <property type="entry name" value="L7ARS6FAMILY"/>
</dbReference>
<dbReference type="PRINTS" id="PR00883">
    <property type="entry name" value="NUCLEARHMG"/>
</dbReference>
<dbReference type="SUPFAM" id="SSF55315">
    <property type="entry name" value="L30e-like"/>
    <property type="match status" value="1"/>
</dbReference>